<keyword id="KW-0963">Cytoplasm</keyword>
<keyword id="KW-0256">Endoplasmic reticulum</keyword>
<keyword id="KW-0472">Membrane</keyword>
<keyword id="KW-0509">mRNA transport</keyword>
<keyword id="KW-0539">Nucleus</keyword>
<keyword id="KW-0653">Protein transport</keyword>
<keyword id="KW-1185">Reference proteome</keyword>
<keyword id="KW-0811">Translocation</keyword>
<keyword id="KW-0813">Transport</keyword>
<feature type="chain" id="PRO_0000339449" description="Nuclear protein localization protein 4">
    <location>
        <begin position="1"/>
        <end position="652"/>
    </location>
</feature>
<feature type="domain" description="MPN" evidence="2">
    <location>
        <begin position="265"/>
        <end position="402"/>
    </location>
</feature>
<feature type="region of interest" description="Disordered" evidence="3">
    <location>
        <begin position="601"/>
        <end position="652"/>
    </location>
</feature>
<feature type="compositionally biased region" description="Basic and acidic residues" evidence="3">
    <location>
        <begin position="633"/>
        <end position="643"/>
    </location>
</feature>
<proteinExistence type="inferred from homology"/>
<evidence type="ECO:0000250" key="1"/>
<evidence type="ECO:0000255" key="2">
    <source>
        <dbReference type="PROSITE-ProRule" id="PRU01182"/>
    </source>
</evidence>
<evidence type="ECO:0000256" key="3">
    <source>
        <dbReference type="SAM" id="MobiDB-lite"/>
    </source>
</evidence>
<evidence type="ECO:0000305" key="4"/>
<gene>
    <name type="primary">npl4</name>
    <name type="ORF">NFIA_021800</name>
</gene>
<reference key="1">
    <citation type="journal article" date="2008" name="PLoS Genet.">
        <title>Genomic islands in the pathogenic filamentous fungus Aspergillus fumigatus.</title>
        <authorList>
            <person name="Fedorova N.D."/>
            <person name="Khaldi N."/>
            <person name="Joardar V.S."/>
            <person name="Maiti R."/>
            <person name="Amedeo P."/>
            <person name="Anderson M.J."/>
            <person name="Crabtree J."/>
            <person name="Silva J.C."/>
            <person name="Badger J.H."/>
            <person name="Albarraq A."/>
            <person name="Angiuoli S."/>
            <person name="Bussey H."/>
            <person name="Bowyer P."/>
            <person name="Cotty P.J."/>
            <person name="Dyer P.S."/>
            <person name="Egan A."/>
            <person name="Galens K."/>
            <person name="Fraser-Liggett C.M."/>
            <person name="Haas B.J."/>
            <person name="Inman J.M."/>
            <person name="Kent R."/>
            <person name="Lemieux S."/>
            <person name="Malavazi I."/>
            <person name="Orvis J."/>
            <person name="Roemer T."/>
            <person name="Ronning C.M."/>
            <person name="Sundaram J.P."/>
            <person name="Sutton G."/>
            <person name="Turner G."/>
            <person name="Venter J.C."/>
            <person name="White O.R."/>
            <person name="Whitty B.R."/>
            <person name="Youngman P."/>
            <person name="Wolfe K.H."/>
            <person name="Goldman G.H."/>
            <person name="Wortman J.R."/>
            <person name="Jiang B."/>
            <person name="Denning D.W."/>
            <person name="Nierman W.C."/>
        </authorList>
    </citation>
    <scope>NUCLEOTIDE SEQUENCE [LARGE SCALE GENOMIC DNA]</scope>
    <source>
        <strain>ATCC 1020 / DSM 3700 / CBS 544.65 / FGSC A1164 / JCM 1740 / NRRL 181 / WB 181</strain>
    </source>
</reference>
<name>NPL4_NEOFI</name>
<comment type="function">
    <text evidence="1">Involved in the import of nuclear-targeted proteins into the nucleus and the export of poly(A) RNA out of the nucleus. Has a role in the endoplasmic reticulum-associated degradation (ERAD) pathway (By similarity).</text>
</comment>
<comment type="subcellular location">
    <subcellularLocation>
        <location evidence="1">Cytoplasm</location>
        <location evidence="1">Perinuclear region</location>
    </subcellularLocation>
    <subcellularLocation>
        <location evidence="1">Endoplasmic reticulum membrane</location>
        <topology evidence="1">Peripheral membrane protein</topology>
        <orientation evidence="1">Cytoplasmic side</orientation>
    </subcellularLocation>
    <subcellularLocation>
        <location evidence="1">Nucleus membrane</location>
        <topology evidence="1">Peripheral membrane protein</topology>
        <orientation evidence="1">Cytoplasmic side</orientation>
    </subcellularLocation>
    <text evidence="1">Localizes mainly at the nuclear periphery and the endoplasmic reticulum membrane.</text>
</comment>
<comment type="similarity">
    <text evidence="4">Belongs to the NPL4 family.</text>
</comment>
<sequence length="652" mass="73019">MAAARPIILRFESRNGQFRLSVSPQEQFPLLQEKILENLPKDVEPSSLVLSNKPIGTGGQERQLKDLAGVSIERVGLKHGDKLFIGYQDKQASQAAPAHKHVTADVSRRLNGAPVPETETVTFHPPTSPSATIKNPWEVVQQSPLDDMLDKKDGKIYRPRDPKMCNHGPKGMCDYCMPLEPYDPKYLAEKKIKHLSFHSYMRKVNATTNKAELKSSFMPPLNEPYYRVRRDCPSGHPPWPEGICTKCQPSAISLQPQEFRMVDHVEFASPDLINSLLDFWRKSGAQRLGFLYGTYEEYTEVPLGIKAVVQAIYEPPQVDEIDGITLHEWPNEKEVDEVARQCGLEKVGVIFTDLLDAGRGDGSVVCKRHIDSYYLSSLEIAFASRMQAKHPKATKWSRTGRFGSNFVTCVLSGDEEGAITVSSYQASISAVEMVRADIVEPSAEPSVMLVQSEDDDTDNKSRYIPEVFYRKINEYGVSAQQNAKPSFPVEYLLVTLTHGFPTEASPMFSASTFPIENREVIGESQELRHVAKKLVSHGDPDKAIREVSDFHLLCFLHSLSMFSKEEEALLCRVATTHDPTEGLKLLNTPGWATLVTVLQESGERPPKRPWLNPADPPRPLSQQGKRHLSSRPESPKSESEQLAKRFKGASLE</sequence>
<organism>
    <name type="scientific">Neosartorya fischeri (strain ATCC 1020 / DSM 3700 / CBS 544.65 / FGSC A1164 / JCM 1740 / NRRL 181 / WB 181)</name>
    <name type="common">Aspergillus fischerianus</name>
    <dbReference type="NCBI Taxonomy" id="331117"/>
    <lineage>
        <taxon>Eukaryota</taxon>
        <taxon>Fungi</taxon>
        <taxon>Dikarya</taxon>
        <taxon>Ascomycota</taxon>
        <taxon>Pezizomycotina</taxon>
        <taxon>Eurotiomycetes</taxon>
        <taxon>Eurotiomycetidae</taxon>
        <taxon>Eurotiales</taxon>
        <taxon>Aspergillaceae</taxon>
        <taxon>Aspergillus</taxon>
        <taxon>Aspergillus subgen. Fumigati</taxon>
    </lineage>
</organism>
<protein>
    <recommendedName>
        <fullName>Nuclear protein localization protein 4</fullName>
    </recommendedName>
</protein>
<accession>A1D4X8</accession>
<dbReference type="EMBL" id="DS027688">
    <property type="protein sequence ID" value="EAW23471.1"/>
    <property type="molecule type" value="Genomic_DNA"/>
</dbReference>
<dbReference type="RefSeq" id="XP_001265368.1">
    <property type="nucleotide sequence ID" value="XM_001265367.1"/>
</dbReference>
<dbReference type="SMR" id="A1D4X8"/>
<dbReference type="STRING" id="331117.A1D4X8"/>
<dbReference type="EnsemblFungi" id="EAW23471">
    <property type="protein sequence ID" value="EAW23471"/>
    <property type="gene ID" value="NFIA_021800"/>
</dbReference>
<dbReference type="GeneID" id="4590895"/>
<dbReference type="KEGG" id="nfi:NFIA_021800"/>
<dbReference type="VEuPathDB" id="FungiDB:NFIA_021800"/>
<dbReference type="eggNOG" id="KOG2834">
    <property type="taxonomic scope" value="Eukaryota"/>
</dbReference>
<dbReference type="HOGENOM" id="CLU_017172_0_0_1"/>
<dbReference type="OMA" id="KWSRTGR"/>
<dbReference type="OrthoDB" id="10251089at2759"/>
<dbReference type="Proteomes" id="UP000006702">
    <property type="component" value="Unassembled WGS sequence"/>
</dbReference>
<dbReference type="GO" id="GO:0005789">
    <property type="term" value="C:endoplasmic reticulum membrane"/>
    <property type="evidence" value="ECO:0007669"/>
    <property type="project" value="UniProtKB-SubCell"/>
</dbReference>
<dbReference type="GO" id="GO:0031965">
    <property type="term" value="C:nuclear membrane"/>
    <property type="evidence" value="ECO:0007669"/>
    <property type="project" value="UniProtKB-SubCell"/>
</dbReference>
<dbReference type="GO" id="GO:0048471">
    <property type="term" value="C:perinuclear region of cytoplasm"/>
    <property type="evidence" value="ECO:0007669"/>
    <property type="project" value="UniProtKB-SubCell"/>
</dbReference>
<dbReference type="GO" id="GO:0043130">
    <property type="term" value="F:ubiquitin binding"/>
    <property type="evidence" value="ECO:0007669"/>
    <property type="project" value="TreeGrafter"/>
</dbReference>
<dbReference type="GO" id="GO:0031625">
    <property type="term" value="F:ubiquitin protein ligase binding"/>
    <property type="evidence" value="ECO:0007669"/>
    <property type="project" value="TreeGrafter"/>
</dbReference>
<dbReference type="GO" id="GO:0051028">
    <property type="term" value="P:mRNA transport"/>
    <property type="evidence" value="ECO:0007669"/>
    <property type="project" value="UniProtKB-KW"/>
</dbReference>
<dbReference type="GO" id="GO:0015031">
    <property type="term" value="P:protein transport"/>
    <property type="evidence" value="ECO:0007669"/>
    <property type="project" value="UniProtKB-KW"/>
</dbReference>
<dbReference type="GO" id="GO:0006511">
    <property type="term" value="P:ubiquitin-dependent protein catabolic process"/>
    <property type="evidence" value="ECO:0007669"/>
    <property type="project" value="InterPro"/>
</dbReference>
<dbReference type="CDD" id="cd08061">
    <property type="entry name" value="MPN_NPL4"/>
    <property type="match status" value="1"/>
</dbReference>
<dbReference type="FunFam" id="3.10.20.90:FF:000344">
    <property type="entry name" value="Nuclear protein localization protein 4"/>
    <property type="match status" value="1"/>
</dbReference>
<dbReference type="Gene3D" id="3.10.20.90">
    <property type="entry name" value="Phosphatidylinositol 3-kinase Catalytic Subunit, Chain A, domain 1"/>
    <property type="match status" value="1"/>
</dbReference>
<dbReference type="InterPro" id="IPR037518">
    <property type="entry name" value="MPN"/>
</dbReference>
<dbReference type="InterPro" id="IPR016563">
    <property type="entry name" value="Npl4"/>
</dbReference>
<dbReference type="InterPro" id="IPR007717">
    <property type="entry name" value="NPL4_C"/>
</dbReference>
<dbReference type="InterPro" id="IPR007716">
    <property type="entry name" value="NPL4_Zn-bd_put"/>
</dbReference>
<dbReference type="InterPro" id="IPR029071">
    <property type="entry name" value="Ubiquitin-like_domsf"/>
</dbReference>
<dbReference type="PANTHER" id="PTHR12710">
    <property type="entry name" value="NUCLEAR PROTEIN LOCALIZATION 4"/>
    <property type="match status" value="1"/>
</dbReference>
<dbReference type="PANTHER" id="PTHR12710:SF0">
    <property type="entry name" value="NUCLEAR PROTEIN LOCALIZATION PROTEIN 4 HOMOLOG"/>
    <property type="match status" value="1"/>
</dbReference>
<dbReference type="Pfam" id="PF05021">
    <property type="entry name" value="NPL4"/>
    <property type="match status" value="1"/>
</dbReference>
<dbReference type="Pfam" id="PF05020">
    <property type="entry name" value="zf-NPL4"/>
    <property type="match status" value="1"/>
</dbReference>
<dbReference type="PIRSF" id="PIRSF010052">
    <property type="entry name" value="Polyub_prc_Npl4"/>
    <property type="match status" value="1"/>
</dbReference>
<dbReference type="SUPFAM" id="SSF54236">
    <property type="entry name" value="Ubiquitin-like"/>
    <property type="match status" value="1"/>
</dbReference>
<dbReference type="PROSITE" id="PS50249">
    <property type="entry name" value="MPN"/>
    <property type="match status" value="1"/>
</dbReference>